<dbReference type="EMBL" id="M37696">
    <property type="protein sequence ID" value="AAB59347.1"/>
    <property type="molecule type" value="Genomic_DNA"/>
</dbReference>
<dbReference type="EMBL" id="M13015">
    <property type="protein sequence ID" value="AAA34953.1"/>
    <property type="molecule type" value="Genomic_DNA"/>
</dbReference>
<dbReference type="EMBL" id="L26347">
    <property type="protein sequence ID" value="AAA62860.1"/>
    <property type="molecule type" value="Genomic_DNA"/>
</dbReference>
<dbReference type="EMBL" id="L36344">
    <property type="protein sequence ID" value="AAA88755.1"/>
    <property type="molecule type" value="Genomic_DNA"/>
</dbReference>
<dbReference type="EMBL" id="Z49552">
    <property type="protein sequence ID" value="CAA89580.1"/>
    <property type="molecule type" value="Genomic_DNA"/>
</dbReference>
<dbReference type="EMBL" id="BK006943">
    <property type="protein sequence ID" value="DAA08839.1"/>
    <property type="molecule type" value="Genomic_DNA"/>
</dbReference>
<dbReference type="PIR" id="A25226">
    <property type="entry name" value="A25226"/>
</dbReference>
<dbReference type="RefSeq" id="NP_012586.1">
    <property type="nucleotide sequence ID" value="NM_001181710.1"/>
</dbReference>
<dbReference type="PDB" id="5ZB2">
    <property type="method" value="X-ray"/>
    <property type="resolution" value="2.30 A"/>
    <property type="chains" value="A=165-565"/>
</dbReference>
<dbReference type="PDBsum" id="5ZB2"/>
<dbReference type="SMR" id="P06779"/>
<dbReference type="BioGRID" id="33806">
    <property type="interactions" value="119"/>
</dbReference>
<dbReference type="ComplexPortal" id="CPX-1191">
    <property type="entry name" value="Global genome repair CUL3-RAD7-RAD16-ELC1 ubiquitin ligase complex"/>
</dbReference>
<dbReference type="ComplexPortal" id="CPX-1709">
    <property type="entry name" value="Nucleotide excision repair factor 4 complex"/>
</dbReference>
<dbReference type="DIP" id="DIP-2484N"/>
<dbReference type="FunCoup" id="P06779">
    <property type="interactions" value="55"/>
</dbReference>
<dbReference type="IntAct" id="P06779">
    <property type="interactions" value="15"/>
</dbReference>
<dbReference type="MINT" id="P06779"/>
<dbReference type="STRING" id="4932.YJR052W"/>
<dbReference type="iPTMnet" id="P06779"/>
<dbReference type="PaxDb" id="4932-YJR052W"/>
<dbReference type="PeptideAtlas" id="P06779"/>
<dbReference type="EnsemblFungi" id="YJR052W_mRNA">
    <property type="protein sequence ID" value="YJR052W"/>
    <property type="gene ID" value="YJR052W"/>
</dbReference>
<dbReference type="GeneID" id="853512"/>
<dbReference type="KEGG" id="sce:YJR052W"/>
<dbReference type="AGR" id="SGD:S000003813"/>
<dbReference type="SGD" id="S000003813">
    <property type="gene designation" value="RAD7"/>
</dbReference>
<dbReference type="VEuPathDB" id="FungiDB:YJR052W"/>
<dbReference type="eggNOG" id="KOG1947">
    <property type="taxonomic scope" value="Eukaryota"/>
</dbReference>
<dbReference type="HOGENOM" id="CLU_006598_2_1_1"/>
<dbReference type="InParanoid" id="P06779"/>
<dbReference type="OMA" id="MCGQLNN"/>
<dbReference type="OrthoDB" id="1924287at2759"/>
<dbReference type="BioCyc" id="YEAST:G3O-31686-MONOMER"/>
<dbReference type="BioGRID-ORCS" id="853512">
    <property type="hits" value="0 hits in 10 CRISPR screens"/>
</dbReference>
<dbReference type="PRO" id="PR:P06779"/>
<dbReference type="Proteomes" id="UP000002311">
    <property type="component" value="Chromosome X"/>
</dbReference>
<dbReference type="RNAct" id="P06779">
    <property type="molecule type" value="protein"/>
</dbReference>
<dbReference type="GO" id="GO:0031463">
    <property type="term" value="C:Cul3-RING ubiquitin ligase complex"/>
    <property type="evidence" value="ECO:0000314"/>
    <property type="project" value="SGD"/>
</dbReference>
<dbReference type="GO" id="GO:0005737">
    <property type="term" value="C:cytoplasm"/>
    <property type="evidence" value="ECO:0000318"/>
    <property type="project" value="GO_Central"/>
</dbReference>
<dbReference type="GO" id="GO:0000113">
    <property type="term" value="C:nucleotide-excision repair factor 4 complex"/>
    <property type="evidence" value="ECO:0000314"/>
    <property type="project" value="SGD"/>
</dbReference>
<dbReference type="GO" id="GO:0070911">
    <property type="term" value="P:global genome nucleotide-excision repair"/>
    <property type="evidence" value="ECO:0000314"/>
    <property type="project" value="ComplexPortal"/>
</dbReference>
<dbReference type="GO" id="GO:0000715">
    <property type="term" value="P:nucleotide-excision repair, DNA damage recognition"/>
    <property type="evidence" value="ECO:0000314"/>
    <property type="project" value="SGD"/>
</dbReference>
<dbReference type="GO" id="GO:0008104">
    <property type="term" value="P:protein localization"/>
    <property type="evidence" value="ECO:0000314"/>
    <property type="project" value="SGD"/>
</dbReference>
<dbReference type="GO" id="GO:0009411">
    <property type="term" value="P:response to UV"/>
    <property type="evidence" value="ECO:0000314"/>
    <property type="project" value="ComplexPortal"/>
</dbReference>
<dbReference type="GO" id="GO:0006511">
    <property type="term" value="P:ubiquitin-dependent protein catabolic process"/>
    <property type="evidence" value="ECO:0000314"/>
    <property type="project" value="ComplexPortal"/>
</dbReference>
<dbReference type="FunFam" id="3.80.10.10:FF:000927">
    <property type="entry name" value="Nucleotide excision NEF4 component"/>
    <property type="match status" value="1"/>
</dbReference>
<dbReference type="Gene3D" id="3.80.10.10">
    <property type="entry name" value="Ribonuclease Inhibitor"/>
    <property type="match status" value="3"/>
</dbReference>
<dbReference type="InterPro" id="IPR006553">
    <property type="entry name" value="Leu-rich_rpt_Cys-con_subtyp"/>
</dbReference>
<dbReference type="InterPro" id="IPR032675">
    <property type="entry name" value="LRR_dom_sf"/>
</dbReference>
<dbReference type="PANTHER" id="PTHR13318:SF247">
    <property type="entry name" value="GH16156P"/>
    <property type="match status" value="1"/>
</dbReference>
<dbReference type="PANTHER" id="PTHR13318">
    <property type="entry name" value="PARTNER OF PAIRED, ISOFORM B-RELATED"/>
    <property type="match status" value="1"/>
</dbReference>
<dbReference type="SMART" id="SM00367">
    <property type="entry name" value="LRR_CC"/>
    <property type="match status" value="4"/>
</dbReference>
<dbReference type="SUPFAM" id="SSF52047">
    <property type="entry name" value="RNI-like"/>
    <property type="match status" value="1"/>
</dbReference>
<proteinExistence type="evidence at protein level"/>
<feature type="chain" id="PRO_0000097155" description="DNA repair protein RAD7">
    <location>
        <begin position="1"/>
        <end position="565"/>
    </location>
</feature>
<feature type="region of interest" description="Hydrophilic">
    <location>
        <begin position="1"/>
        <end position="200"/>
    </location>
</feature>
<feature type="region of interest" description="Disordered" evidence="1">
    <location>
        <begin position="1"/>
        <end position="22"/>
    </location>
</feature>
<feature type="region of interest" description="Disordered" evidence="1">
    <location>
        <begin position="41"/>
        <end position="68"/>
    </location>
</feature>
<feature type="region of interest" description="Disordered" evidence="1">
    <location>
        <begin position="105"/>
        <end position="137"/>
    </location>
</feature>
<feature type="compositionally biased region" description="Basic and acidic residues" evidence="1">
    <location>
        <begin position="47"/>
        <end position="62"/>
    </location>
</feature>
<feature type="compositionally biased region" description="Polar residues" evidence="1">
    <location>
        <begin position="115"/>
        <end position="127"/>
    </location>
</feature>
<feature type="modified residue" description="Phosphoserine" evidence="8">
    <location>
        <position position="64"/>
    </location>
</feature>
<feature type="modified residue" description="Phosphoserine" evidence="8">
    <location>
        <position position="85"/>
    </location>
</feature>
<feature type="sequence conflict" description="In Ref. 1; AAB59347." evidence="7" ref="1">
    <original>LL</original>
    <variation>FV</variation>
    <location>
        <begin position="278"/>
        <end position="279"/>
    </location>
</feature>
<feature type="sequence conflict" description="In Ref. 1; AAB59347." evidence="7" ref="1">
    <original>AC</original>
    <variation>RP</variation>
    <location>
        <begin position="504"/>
        <end position="505"/>
    </location>
</feature>
<feature type="helix" evidence="9">
    <location>
        <begin position="168"/>
        <end position="201"/>
    </location>
</feature>
<feature type="helix" evidence="9">
    <location>
        <begin position="207"/>
        <end position="209"/>
    </location>
</feature>
<feature type="helix" evidence="9">
    <location>
        <begin position="210"/>
        <end position="219"/>
    </location>
</feature>
<feature type="helix" evidence="9">
    <location>
        <begin position="227"/>
        <end position="231"/>
    </location>
</feature>
<feature type="strand" evidence="9">
    <location>
        <begin position="238"/>
        <end position="242"/>
    </location>
</feature>
<feature type="helix" evidence="9">
    <location>
        <begin position="249"/>
        <end position="258"/>
    </location>
</feature>
<feature type="strand" evidence="9">
    <location>
        <begin position="263"/>
        <end position="269"/>
    </location>
</feature>
<feature type="helix" evidence="9">
    <location>
        <begin position="275"/>
        <end position="284"/>
    </location>
</feature>
<feature type="strand" evidence="9">
    <location>
        <begin position="290"/>
        <end position="294"/>
    </location>
</feature>
<feature type="helix" evidence="9">
    <location>
        <begin position="301"/>
        <end position="310"/>
    </location>
</feature>
<feature type="turn" evidence="9">
    <location>
        <begin position="311"/>
        <end position="314"/>
    </location>
</feature>
<feature type="strand" evidence="9">
    <location>
        <begin position="317"/>
        <end position="322"/>
    </location>
</feature>
<feature type="helix" evidence="9">
    <location>
        <begin position="328"/>
        <end position="338"/>
    </location>
</feature>
<feature type="helix" evidence="9">
    <location>
        <begin position="339"/>
        <end position="341"/>
    </location>
</feature>
<feature type="strand" evidence="9">
    <location>
        <begin position="343"/>
        <end position="349"/>
    </location>
</feature>
<feature type="helix" evidence="9">
    <location>
        <begin position="356"/>
        <end position="358"/>
    </location>
</feature>
<feature type="helix" evidence="9">
    <location>
        <begin position="359"/>
        <end position="362"/>
    </location>
</feature>
<feature type="strand" evidence="9">
    <location>
        <begin position="370"/>
        <end position="374"/>
    </location>
</feature>
<feature type="helix" evidence="9">
    <location>
        <begin position="379"/>
        <end position="381"/>
    </location>
</feature>
<feature type="helix" evidence="9">
    <location>
        <begin position="384"/>
        <end position="394"/>
    </location>
</feature>
<feature type="helix" evidence="9">
    <location>
        <begin position="395"/>
        <end position="397"/>
    </location>
</feature>
<feature type="strand" evidence="9">
    <location>
        <begin position="400"/>
        <end position="405"/>
    </location>
</feature>
<feature type="helix" evidence="9">
    <location>
        <begin position="411"/>
        <end position="416"/>
    </location>
</feature>
<feature type="helix" evidence="9">
    <location>
        <begin position="418"/>
        <end position="421"/>
    </location>
</feature>
<feature type="strand" evidence="9">
    <location>
        <begin position="430"/>
        <end position="432"/>
    </location>
</feature>
<feature type="helix" evidence="9">
    <location>
        <begin position="441"/>
        <end position="450"/>
    </location>
</feature>
<feature type="strand" evidence="9">
    <location>
        <begin position="458"/>
        <end position="460"/>
    </location>
</feature>
<feature type="helix" evidence="9">
    <location>
        <begin position="469"/>
        <end position="477"/>
    </location>
</feature>
<feature type="helix" evidence="9">
    <location>
        <begin position="480"/>
        <end position="482"/>
    </location>
</feature>
<feature type="strand" evidence="9">
    <location>
        <begin position="485"/>
        <end position="488"/>
    </location>
</feature>
<feature type="helix" evidence="9">
    <location>
        <begin position="497"/>
        <end position="501"/>
    </location>
</feature>
<feature type="strand" evidence="9">
    <location>
        <begin position="510"/>
        <end position="512"/>
    </location>
</feature>
<feature type="helix" evidence="9">
    <location>
        <begin position="521"/>
        <end position="530"/>
    </location>
</feature>
<feature type="strand" evidence="9">
    <location>
        <begin position="536"/>
        <end position="538"/>
    </location>
</feature>
<feature type="strand" evidence="9">
    <location>
        <begin position="556"/>
        <end position="559"/>
    </location>
</feature>
<feature type="helix" evidence="9">
    <location>
        <begin position="561"/>
        <end position="563"/>
    </location>
</feature>
<gene>
    <name type="primary">RAD7</name>
    <name type="ordered locus">YJR052W</name>
    <name type="ORF">J1665</name>
</gene>
<organism>
    <name type="scientific">Saccharomyces cerevisiae (strain ATCC 204508 / S288c)</name>
    <name type="common">Baker's yeast</name>
    <dbReference type="NCBI Taxonomy" id="559292"/>
    <lineage>
        <taxon>Eukaryota</taxon>
        <taxon>Fungi</taxon>
        <taxon>Dikarya</taxon>
        <taxon>Ascomycota</taxon>
        <taxon>Saccharomycotina</taxon>
        <taxon>Saccharomycetes</taxon>
        <taxon>Saccharomycetales</taxon>
        <taxon>Saccharomycetaceae</taxon>
        <taxon>Saccharomyces</taxon>
    </lineage>
</organism>
<sequence length="565" mass="63777">MYRSRNRPKRGGENEVKGPNSALTQFLREEGISAENIKQKWYQRQSKKQEDATDEKKGKAEDDSFTAEISRVVEDEEIDEIGTGSGTETERAQVSYDARMKLVPADSDEEEYETSHISDTPVSLSSANDRESLTKKRQNTAKIIQNRRRKRKRAADLLDRRVNKVSSLQSLCITKISENISKWQKEADESSKLVFNKLRDVLGGVSTANLNNLAKALSKNRALNDHTLQLFLKTDLKRLTFSDCSKISFDGYKTLAIFSPHLTELSLQMCGQLNHESLLYIAEKLPNLKSLNLDGPFLINEDTWEKFFVIMKGRLEEFHISNTHRFTDKSLSNLLINCGSTLVSLGLSRLDSISNYALLPQYLVNDEFHSLCIEYPFNEEDVNDEIIINLLGQIGRTLRKLVLNGCIDLTDSMIINGLTAFIPEKCPLEVLSLEESDQITTDSLSYFFSKVELNNLIECSFRRCLQLGDMAIIELLLNGARDSLRSLNLNSLKELTKEAFVALACPNLTYLDLGFVRCVDDSVIQMLGEQNPNLTVIDVFGDNLVTEKATMRPGLTLIGRQSDSI</sequence>
<reference key="1">
    <citation type="journal article" date="1990" name="Gene">
        <title>Nucleotide sequence of the COR region: a cluster of six genes in the yeast Saccharomyces cerevisiae.</title>
        <authorList>
            <person name="Melnick L."/>
            <person name="Sherman F."/>
        </authorList>
    </citation>
    <scope>NUCLEOTIDE SEQUENCE [GENOMIC DNA]</scope>
</reference>
<reference key="2">
    <citation type="journal article" date="1986" name="Mol. Cell. Biol.">
        <title>RAD7 gene of Saccharomyces cerevisiae: transcripts, nucleotide sequence analysis, and functional relationship between the RAD7 and RAD23 gene products.</title>
        <authorList>
            <person name="Perozzi G."/>
            <person name="Prakash S."/>
        </authorList>
    </citation>
    <scope>NUCLEOTIDE SEQUENCE [GENOMIC DNA]</scope>
    <scope>DISRUPTION PHENOTYPE</scope>
</reference>
<reference key="3">
    <citation type="journal article" date="1994" name="Yeast">
        <title>Revised nucleotide sequence of the COR region of yeast Saccharomyces cerevisiae chromosome X.</title>
        <authorList>
            <person name="Huang M.-E."/>
            <person name="Manus V."/>
            <person name="Chuat J.-C."/>
            <person name="Galibert F."/>
        </authorList>
    </citation>
    <scope>NUCLEOTIDE SEQUENCE [GENOMIC DNA]</scope>
    <source>
        <strain>ATCC 204508 / S288c</strain>
    </source>
</reference>
<reference key="4">
    <citation type="journal article" date="1996" name="EMBO J.">
        <title>Complete nucleotide sequence of Saccharomyces cerevisiae chromosome X.</title>
        <authorList>
            <person name="Galibert F."/>
            <person name="Alexandraki D."/>
            <person name="Baur A."/>
            <person name="Boles E."/>
            <person name="Chalwatzis N."/>
            <person name="Chuat J.-C."/>
            <person name="Coster F."/>
            <person name="Cziepluch C."/>
            <person name="de Haan M."/>
            <person name="Domdey H."/>
            <person name="Durand P."/>
            <person name="Entian K.-D."/>
            <person name="Gatius M."/>
            <person name="Goffeau A."/>
            <person name="Grivell L.A."/>
            <person name="Hennemann A."/>
            <person name="Herbert C.J."/>
            <person name="Heumann K."/>
            <person name="Hilger F."/>
            <person name="Hollenberg C.P."/>
            <person name="Huang M.-E."/>
            <person name="Jacq C."/>
            <person name="Jauniaux J.-C."/>
            <person name="Katsoulou C."/>
            <person name="Kirchrath L."/>
            <person name="Kleine K."/>
            <person name="Kordes E."/>
            <person name="Koetter P."/>
            <person name="Liebl S."/>
            <person name="Louis E.J."/>
            <person name="Manus V."/>
            <person name="Mewes H.-W."/>
            <person name="Miosga T."/>
            <person name="Obermaier B."/>
            <person name="Perea J."/>
            <person name="Pohl T.M."/>
            <person name="Portetelle D."/>
            <person name="Pujol A."/>
            <person name="Purnelle B."/>
            <person name="Ramezani Rad M."/>
            <person name="Rasmussen S.W."/>
            <person name="Rose M."/>
            <person name="Rossau R."/>
            <person name="Schaaff-Gerstenschlaeger I."/>
            <person name="Smits P.H.M."/>
            <person name="Scarcez T."/>
            <person name="Soriano N."/>
            <person name="To Van D."/>
            <person name="Tzermia M."/>
            <person name="Van Broekhoven A."/>
            <person name="Vandenbol M."/>
            <person name="Wedler H."/>
            <person name="von Wettstein D."/>
            <person name="Wambutt R."/>
            <person name="Zagulski M."/>
            <person name="Zollner A."/>
            <person name="Karpfinger-Hartl L."/>
        </authorList>
    </citation>
    <scope>NUCLEOTIDE SEQUENCE [LARGE SCALE GENOMIC DNA]</scope>
    <source>
        <strain>ATCC 204508 / S288c</strain>
    </source>
</reference>
<reference key="5">
    <citation type="journal article" date="2014" name="G3 (Bethesda)">
        <title>The reference genome sequence of Saccharomyces cerevisiae: Then and now.</title>
        <authorList>
            <person name="Engel S.R."/>
            <person name="Dietrich F.S."/>
            <person name="Fisk D.G."/>
            <person name="Binkley G."/>
            <person name="Balakrishnan R."/>
            <person name="Costanzo M.C."/>
            <person name="Dwight S.S."/>
            <person name="Hitz B.C."/>
            <person name="Karra K."/>
            <person name="Nash R.S."/>
            <person name="Weng S."/>
            <person name="Wong E.D."/>
            <person name="Lloyd P."/>
            <person name="Skrzypek M.S."/>
            <person name="Miyasato S.R."/>
            <person name="Simison M."/>
            <person name="Cherry J.M."/>
        </authorList>
    </citation>
    <scope>GENOME REANNOTATION</scope>
    <source>
        <strain>ATCC 204508 / S288c</strain>
    </source>
</reference>
<reference key="6">
    <citation type="journal article" date="1999" name="Genes Dev.">
        <title>Yeast autonomously replicating sequence binding factor is involved in nucleotide excision repair.</title>
        <authorList>
            <person name="Reed S.H."/>
            <person name="Akiyama M."/>
            <person name="Stillman B."/>
            <person name="Friedberg E.C."/>
        </authorList>
    </citation>
    <scope>IDENTIFICATION IN THE GGR COMPLEX</scope>
    <scope>FUNCTION</scope>
</reference>
<reference key="7">
    <citation type="journal article" date="2003" name="Nature">
        <title>Global analysis of protein expression in yeast.</title>
        <authorList>
            <person name="Ghaemmaghami S."/>
            <person name="Huh W.-K."/>
            <person name="Bower K."/>
            <person name="Howson R.W."/>
            <person name="Belle A."/>
            <person name="Dephoure N."/>
            <person name="O'Shea E.K."/>
            <person name="Weissman J.S."/>
        </authorList>
    </citation>
    <scope>LEVEL OF PROTEIN EXPRESSION [LARGE SCALE ANALYSIS]</scope>
</reference>
<reference key="8">
    <citation type="journal article" date="2004" name="DNA Repair">
        <title>The yeast Rad7/Rad16/Abf1 complex generates superhelical torsion in DNA that is required for nucleotide excision repair.</title>
        <authorList>
            <person name="Yu S."/>
            <person name="Owen-Hughes T."/>
            <person name="Friedberg E.C."/>
            <person name="Waters R."/>
            <person name="Reed S.H."/>
        </authorList>
    </citation>
    <scope>FUNCTION OF THE GGR COMPLEX</scope>
</reference>
<reference key="9">
    <citation type="journal article" date="2008" name="Mol. Cell. Proteomics">
        <title>A multidimensional chromatography technology for in-depth phosphoproteome analysis.</title>
        <authorList>
            <person name="Albuquerque C.P."/>
            <person name="Smolka M.B."/>
            <person name="Payne S.H."/>
            <person name="Bafna V."/>
            <person name="Eng J."/>
            <person name="Zhou H."/>
        </authorList>
    </citation>
    <scope>IDENTIFICATION BY MASS SPECTROMETRY [LARGE SCALE ANALYSIS]</scope>
</reference>
<reference key="10">
    <citation type="journal article" date="2009" name="Proc. Natl. Acad. Sci. U.S.A.">
        <title>Distinct ubiquitin ligases act sequentially for RNA polymerase II polyubiquitylation.</title>
        <authorList>
            <person name="Harreman M."/>
            <person name="Taschner M."/>
            <person name="Sigurdsson S."/>
            <person name="Anindya R."/>
            <person name="Reid J."/>
            <person name="Somesh B."/>
            <person name="Kong S.E."/>
            <person name="Banks C.A."/>
            <person name="Conaway R.C."/>
            <person name="Conaway J.W."/>
            <person name="Svejstrup J.Q."/>
        </authorList>
    </citation>
    <scope>INTERACTION WITH ELC1</scope>
    <scope>IDENTIFICATION BY MASS SPECTROMETRY</scope>
</reference>
<reference key="11">
    <citation type="journal article" date="2009" name="Science">
        <title>Global analysis of Cdk1 substrate phosphorylation sites provides insights into evolution.</title>
        <authorList>
            <person name="Holt L.J."/>
            <person name="Tuch B.B."/>
            <person name="Villen J."/>
            <person name="Johnson A.D."/>
            <person name="Gygi S.P."/>
            <person name="Morgan D.O."/>
        </authorList>
    </citation>
    <scope>PHOSPHORYLATION [LARGE SCALE ANALYSIS] AT SER-64 AND SER-85</scope>
    <scope>IDENTIFICATION BY MASS SPECTROMETRY [LARGE SCALE ANALYSIS]</scope>
</reference>
<protein>
    <recommendedName>
        <fullName>DNA repair protein RAD7</fullName>
    </recommendedName>
</protein>
<keyword id="KW-0002">3D-structure</keyword>
<keyword id="KW-0227">DNA damage</keyword>
<keyword id="KW-0234">DNA repair</keyword>
<keyword id="KW-0597">Phosphoprotein</keyword>
<keyword id="KW-1185">Reference proteome</keyword>
<comment type="function">
    <text evidence="2 4">Component of the global genome repair (GGR) complex which promotes global genome nucleotide excision repair (GG-NER) which removes DNA damage from nontranscribing DNA. This protein is one of 10 proteins (RAD1, 2,3,4,7,10,14, 16,23 and MMS19) involved in excision repair of DNA damaged with UV light, bulky adducts, or cross-linking agents.</text>
</comment>
<comment type="subunit">
    <text evidence="2 5">Component of the global genome repair (GGR) complex composed of at least ABF1, RAD7 and RAD16 (PubMed:10601031). Interacts with ELC1 (PubMed:19920177).</text>
</comment>
<comment type="interaction">
    <interactant intactId="EBI-14780">
        <id>P06779</id>
    </interactant>
    <interactant intactId="EBI-30154">
        <id>Q03071</id>
        <label>ELC1</label>
    </interactant>
    <organismsDiffer>false</organismsDiffer>
    <experiments>5</experiments>
</comment>
<comment type="interaction">
    <interactant intactId="EBI-14780">
        <id>P06779</id>
    </interactant>
    <interactant intactId="EBI-14645">
        <id>P31244</id>
        <label>RAD16</label>
    </interactant>
    <organismsDiffer>false</organismsDiffer>
    <experiments>6</experiments>
</comment>
<comment type="interaction">
    <interactant intactId="EBI-14780">
        <id>P06779</id>
    </interactant>
    <interactant intactId="EBI-8637">
        <id>P0CS90</id>
        <label>SSC1</label>
    </interactant>
    <organismsDiffer>false</organismsDiffer>
    <experiments>2</experiments>
</comment>
<comment type="disruption phenotype">
    <text evidence="6">Mutants with mutations in the RAD7, RAD14, RAD16, and RAD23 genes show partial incision defectiveness.</text>
</comment>
<comment type="miscellaneous">
    <text evidence="3">Present with 937 molecules/cell in log phase SD medium.</text>
</comment>
<comment type="similarity">
    <text evidence="7">To S.pombe SpCC613.14.</text>
</comment>
<evidence type="ECO:0000256" key="1">
    <source>
        <dbReference type="SAM" id="MobiDB-lite"/>
    </source>
</evidence>
<evidence type="ECO:0000269" key="2">
    <source>
    </source>
</evidence>
<evidence type="ECO:0000269" key="3">
    <source>
    </source>
</evidence>
<evidence type="ECO:0000269" key="4">
    <source>
    </source>
</evidence>
<evidence type="ECO:0000269" key="5">
    <source>
    </source>
</evidence>
<evidence type="ECO:0000269" key="6">
    <source>
    </source>
</evidence>
<evidence type="ECO:0000305" key="7"/>
<evidence type="ECO:0007744" key="8">
    <source>
    </source>
</evidence>
<evidence type="ECO:0007829" key="9">
    <source>
        <dbReference type="PDB" id="5ZB2"/>
    </source>
</evidence>
<name>RAD7_YEAST</name>
<accession>P06779</accession>
<accession>D6VWM3</accession>